<proteinExistence type="evidence at protein level"/>
<feature type="chain" id="PRO_0000097742" description="Suppressor of HU sensitivity involved in recombination protein 1">
    <location>
        <begin position="1"/>
        <end position="150"/>
    </location>
</feature>
<feature type="sequence conflict" description="In Ref. 4; AAA35196." evidence="3" ref="4">
    <original>P</original>
    <variation>A</variation>
    <location>
        <position position="138"/>
    </location>
</feature>
<feature type="helix" evidence="4">
    <location>
        <begin position="3"/>
        <end position="11"/>
    </location>
</feature>
<feature type="strand" evidence="4">
    <location>
        <begin position="24"/>
        <end position="30"/>
    </location>
</feature>
<feature type="helix" evidence="4">
    <location>
        <begin position="31"/>
        <end position="38"/>
    </location>
</feature>
<feature type="turn" evidence="4">
    <location>
        <begin position="39"/>
        <end position="45"/>
    </location>
</feature>
<feature type="helix" evidence="4">
    <location>
        <begin position="51"/>
        <end position="59"/>
    </location>
</feature>
<feature type="strand" evidence="4">
    <location>
        <begin position="61"/>
        <end position="66"/>
    </location>
</feature>
<feature type="helix" evidence="4">
    <location>
        <begin position="69"/>
        <end position="81"/>
    </location>
</feature>
<feature type="strand" evidence="4">
    <location>
        <begin position="83"/>
        <end position="85"/>
    </location>
</feature>
<feature type="strand" evidence="4">
    <location>
        <begin position="89"/>
        <end position="95"/>
    </location>
</feature>
<feature type="helix" evidence="4">
    <location>
        <begin position="96"/>
        <end position="99"/>
    </location>
</feature>
<feature type="helix" evidence="4">
    <location>
        <begin position="105"/>
        <end position="119"/>
    </location>
</feature>
<feature type="strand" evidence="4">
    <location>
        <begin position="122"/>
        <end position="130"/>
    </location>
</feature>
<feature type="helix" evidence="4">
    <location>
        <begin position="137"/>
        <end position="149"/>
    </location>
</feature>
<keyword id="KW-0002">3D-structure</keyword>
<keyword id="KW-0227">DNA damage</keyword>
<keyword id="KW-0233">DNA recombination</keyword>
<keyword id="KW-0234">DNA repair</keyword>
<keyword id="KW-0539">Nucleus</keyword>
<keyword id="KW-1185">Reference proteome</keyword>
<organism>
    <name type="scientific">Saccharomyces cerevisiae (strain ATCC 204508 / S288c)</name>
    <name type="common">Baker's yeast</name>
    <dbReference type="NCBI Taxonomy" id="559292"/>
    <lineage>
        <taxon>Eukaryota</taxon>
        <taxon>Fungi</taxon>
        <taxon>Dikarya</taxon>
        <taxon>Ascomycota</taxon>
        <taxon>Saccharomycotina</taxon>
        <taxon>Saccharomycetes</taxon>
        <taxon>Saccharomycetales</taxon>
        <taxon>Saccharomycetaceae</taxon>
        <taxon>Saccharomyces</taxon>
    </lineage>
</organism>
<sequence length="150" mass="17121">MQFEERLQQLVESDWSLDQSSPNVLVIVLGDTARKYVELGGLKEHVTTNTVAGHVASRERVSVVFLGRVKYLYMYLTRMQAQANGPQYSNVLVYGLWDLTATQDGPQQLRLLSLVLRQCLSLPSKVEFYPEPPSSSVPARLLRFWDHIIR</sequence>
<gene>
    <name type="primary">SHU1</name>
    <name type="ordered locus">YHL006C</name>
</gene>
<evidence type="ECO:0000269" key="1">
    <source>
    </source>
</evidence>
<evidence type="ECO:0000269" key="2">
    <source>
    </source>
</evidence>
<evidence type="ECO:0000305" key="3"/>
<evidence type="ECO:0007829" key="4">
    <source>
        <dbReference type="PDB" id="5XYN"/>
    </source>
</evidence>
<comment type="function">
    <text evidence="1 2">Plays a role in a RAD51/RAD54-dependent homologous recombination repair (HRR) pathway to repair MMS-induced lesions during S-phase.</text>
</comment>
<comment type="subunit">
    <text evidence="1 2">Component of the SHU complex composed of at least CSM2, PSY3, SHU1 and SHU2.</text>
</comment>
<comment type="subcellular location">
    <subcellularLocation>
        <location evidence="1">Nucleus</location>
    </subcellularLocation>
</comment>
<comment type="sequence caution" evidence="3">
    <conflict type="frameshift">
        <sequence resource="EMBL-CDS" id="AAA35196"/>
    </conflict>
</comment>
<reference key="1">
    <citation type="journal article" date="1994" name="Science">
        <title>Complete nucleotide sequence of Saccharomyces cerevisiae chromosome VIII.</title>
        <authorList>
            <person name="Johnston M."/>
            <person name="Andrews S."/>
            <person name="Brinkman R."/>
            <person name="Cooper J."/>
            <person name="Ding H."/>
            <person name="Dover J."/>
            <person name="Du Z."/>
            <person name="Favello A."/>
            <person name="Fulton L."/>
            <person name="Gattung S."/>
            <person name="Geisel C."/>
            <person name="Kirsten J."/>
            <person name="Kucaba T."/>
            <person name="Hillier L.W."/>
            <person name="Jier M."/>
            <person name="Johnston L."/>
            <person name="Langston Y."/>
            <person name="Latreille P."/>
            <person name="Louis E.J."/>
            <person name="Macri C."/>
            <person name="Mardis E."/>
            <person name="Menezes S."/>
            <person name="Mouser L."/>
            <person name="Nhan M."/>
            <person name="Rifkin L."/>
            <person name="Riles L."/>
            <person name="St Peter H."/>
            <person name="Trevaskis E."/>
            <person name="Vaughan K."/>
            <person name="Vignati D."/>
            <person name="Wilcox L."/>
            <person name="Wohldman P."/>
            <person name="Waterston R."/>
            <person name="Wilson R."/>
            <person name="Vaudin M."/>
        </authorList>
    </citation>
    <scope>NUCLEOTIDE SEQUENCE [LARGE SCALE GENOMIC DNA]</scope>
    <source>
        <strain>ATCC 204508 / S288c</strain>
    </source>
</reference>
<reference key="2">
    <citation type="submission" date="2004-02" db="EMBL/GenBank/DDBJ databases">
        <authorList>
            <person name="Fisk D."/>
            <person name="Cherry J.M."/>
        </authorList>
    </citation>
    <scope>SEQUENCE REVISION TO C-TERMINUS</scope>
</reference>
<reference key="3">
    <citation type="journal article" date="2014" name="G3 (Bethesda)">
        <title>The reference genome sequence of Saccharomyces cerevisiae: Then and now.</title>
        <authorList>
            <person name="Engel S.R."/>
            <person name="Dietrich F.S."/>
            <person name="Fisk D.G."/>
            <person name="Binkley G."/>
            <person name="Balakrishnan R."/>
            <person name="Costanzo M.C."/>
            <person name="Dwight S.S."/>
            <person name="Hitz B.C."/>
            <person name="Karra K."/>
            <person name="Nash R.S."/>
            <person name="Weng S."/>
            <person name="Wong E.D."/>
            <person name="Lloyd P."/>
            <person name="Skrzypek M.S."/>
            <person name="Miyasato S.R."/>
            <person name="Simison M."/>
            <person name="Cherry J.M."/>
        </authorList>
    </citation>
    <scope>GENOME REANNOTATION</scope>
    <source>
        <strain>ATCC 204508 / S288c</strain>
    </source>
</reference>
<reference key="4">
    <citation type="submission" date="1994-05" db="EMBL/GenBank/DDBJ databases">
        <authorList>
            <person name="Dignard D."/>
        </authorList>
    </citation>
    <scope>NUCLEOTIDE SEQUENCE [GENOMIC DNA]</scope>
</reference>
<reference key="5">
    <citation type="journal article" date="2005" name="Genetics">
        <title>A genetic screen for top3 suppressors in Saccharomyces cerevisiae identifies SHU1, SHU2, PSY3 and CSM2: four genes involved in error-free DNA repair.</title>
        <authorList>
            <person name="Shor E."/>
            <person name="Weinstein J."/>
            <person name="Rothstein R."/>
        </authorList>
    </citation>
    <scope>IDENTIFICATION IN THE SHU COMPLEX</scope>
    <scope>SUBCELLULAR LOCATION</scope>
    <scope>FUNCTION</scope>
</reference>
<reference key="6">
    <citation type="journal article" date="2009" name="Mol. Microbiol.">
        <title>The yeast Shu complex couples error-free post-replication repair to homologous recombination.</title>
        <authorList>
            <person name="Ball L.G."/>
            <person name="Zhang K."/>
            <person name="Cobb J.A."/>
            <person name="Boone C."/>
            <person name="Xiao W."/>
        </authorList>
    </citation>
    <scope>IDENTIFICATION IN THE SHU COMPLEX</scope>
    <scope>FUNCTION</scope>
</reference>
<protein>
    <recommendedName>
        <fullName>Suppressor of HU sensitivity involved in recombination protein 1</fullName>
    </recommendedName>
</protein>
<name>SHU1_YEAST</name>
<accession>P38751</accession>
<accession>D3DKQ9</accession>
<accession>Q07190</accession>
<dbReference type="EMBL" id="U11581">
    <property type="protein sequence ID" value="AAB69748.2"/>
    <property type="molecule type" value="Genomic_DNA"/>
</dbReference>
<dbReference type="EMBL" id="L09261">
    <property type="protein sequence ID" value="AAA35196.1"/>
    <property type="status" value="ALT_FRAME"/>
    <property type="molecule type" value="Genomic_DNA"/>
</dbReference>
<dbReference type="EMBL" id="BK006934">
    <property type="protein sequence ID" value="DAA06682.1"/>
    <property type="molecule type" value="Genomic_DNA"/>
</dbReference>
<dbReference type="PIR" id="S46822">
    <property type="entry name" value="S46822"/>
</dbReference>
<dbReference type="RefSeq" id="NP_011857.2">
    <property type="nucleotide sequence ID" value="NM_001179086.1"/>
</dbReference>
<dbReference type="PDB" id="5XYN">
    <property type="method" value="X-ray"/>
    <property type="resolution" value="3.30 A"/>
    <property type="chains" value="C=1-150"/>
</dbReference>
<dbReference type="PDBsum" id="5XYN"/>
<dbReference type="SMR" id="P38751"/>
<dbReference type="BioGRID" id="36420">
    <property type="interactions" value="80"/>
</dbReference>
<dbReference type="ComplexPortal" id="CPX-3087">
    <property type="entry name" value="Shu complex"/>
</dbReference>
<dbReference type="DIP" id="DIP-1874N"/>
<dbReference type="FunCoup" id="P38751">
    <property type="interactions" value="38"/>
</dbReference>
<dbReference type="IntAct" id="P38751">
    <property type="interactions" value="7"/>
</dbReference>
<dbReference type="MINT" id="P38751"/>
<dbReference type="STRING" id="4932.YHL006C"/>
<dbReference type="PaxDb" id="4932-YHL006C"/>
<dbReference type="PeptideAtlas" id="P38751"/>
<dbReference type="EnsemblFungi" id="YHL006C_mRNA">
    <property type="protein sequence ID" value="YHL006C"/>
    <property type="gene ID" value="YHL006C"/>
</dbReference>
<dbReference type="GeneID" id="856383"/>
<dbReference type="KEGG" id="sce:YHL006C"/>
<dbReference type="AGR" id="SGD:S000000998"/>
<dbReference type="SGD" id="S000000998">
    <property type="gene designation" value="SHU1"/>
</dbReference>
<dbReference type="VEuPathDB" id="FungiDB:YHL006C"/>
<dbReference type="HOGENOM" id="CLU_1741621_0_0_1"/>
<dbReference type="InParanoid" id="P38751"/>
<dbReference type="OMA" id="FRIKRKH"/>
<dbReference type="OrthoDB" id="4053447at2759"/>
<dbReference type="BioCyc" id="YEAST:G3O-31028-MONOMER"/>
<dbReference type="BioGRID-ORCS" id="856383">
    <property type="hits" value="6 hits in 10 CRISPR screens"/>
</dbReference>
<dbReference type="ChiTaRS" id="SHU1">
    <property type="organism name" value="yeast"/>
</dbReference>
<dbReference type="PRO" id="PR:P38751"/>
<dbReference type="Proteomes" id="UP000002311">
    <property type="component" value="Chromosome VIII"/>
</dbReference>
<dbReference type="RNAct" id="P38751">
    <property type="molecule type" value="protein"/>
</dbReference>
<dbReference type="GO" id="GO:0005730">
    <property type="term" value="C:nucleolus"/>
    <property type="evidence" value="ECO:0000314"/>
    <property type="project" value="SGD"/>
</dbReference>
<dbReference type="GO" id="GO:0097196">
    <property type="term" value="C:Shu complex"/>
    <property type="evidence" value="ECO:0000314"/>
    <property type="project" value="SGD"/>
</dbReference>
<dbReference type="GO" id="GO:0035861">
    <property type="term" value="C:site of double-strand break"/>
    <property type="evidence" value="ECO:0000315"/>
    <property type="project" value="SGD"/>
</dbReference>
<dbReference type="GO" id="GO:0000730">
    <property type="term" value="P:DNA recombinase assembly"/>
    <property type="evidence" value="ECO:0000315"/>
    <property type="project" value="SGD"/>
</dbReference>
<dbReference type="GO" id="GO:0042275">
    <property type="term" value="P:error-free postreplication DNA repair"/>
    <property type="evidence" value="ECO:0000303"/>
    <property type="project" value="ComplexPortal"/>
</dbReference>
<dbReference type="GO" id="GO:0043007">
    <property type="term" value="P:maintenance of rDNA"/>
    <property type="evidence" value="ECO:0000316"/>
    <property type="project" value="SGD"/>
</dbReference>
<dbReference type="GO" id="GO:1903112">
    <property type="term" value="P:positive regulation of single-strand break repair via homologous recombination"/>
    <property type="evidence" value="ECO:0000303"/>
    <property type="project" value="ComplexPortal"/>
</dbReference>
<dbReference type="GO" id="GO:0000725">
    <property type="term" value="P:recombinational repair"/>
    <property type="evidence" value="ECO:0000315"/>
    <property type="project" value="SGD"/>
</dbReference>